<reference key="1">
    <citation type="journal article" date="2008" name="J. Bacteriol.">
        <title>Insights into plant cell wall degradation from the genome sequence of the soil bacterium Cellvibrio japonicus.</title>
        <authorList>
            <person name="DeBoy R.T."/>
            <person name="Mongodin E.F."/>
            <person name="Fouts D.E."/>
            <person name="Tailford L.E."/>
            <person name="Khouri H."/>
            <person name="Emerson J.B."/>
            <person name="Mohamoud Y."/>
            <person name="Watkins K."/>
            <person name="Henrissat B."/>
            <person name="Gilbert H.J."/>
            <person name="Nelson K.E."/>
        </authorList>
    </citation>
    <scope>NUCLEOTIDE SEQUENCE [LARGE SCALE GENOMIC DNA]</scope>
    <source>
        <strain>Ueda107</strain>
    </source>
</reference>
<keyword id="KW-0067">ATP-binding</keyword>
<keyword id="KW-0436">Ligase</keyword>
<keyword id="KW-0479">Metal-binding</keyword>
<keyword id="KW-0547">Nucleotide-binding</keyword>
<keyword id="KW-0671">Queuosine biosynthesis</keyword>
<keyword id="KW-1185">Reference proteome</keyword>
<keyword id="KW-0862">Zinc</keyword>
<sequence>MSRKKAVILVSGGLDSTTVIAIARSQGYDCYTISFDYGQRHRAELKAAEITAKAHGSLEHKVIRLDLGAIGGSALTDTSIDVPEEETSGIPVTYVPARNTVFLSIALGWAEVLGALDIFIGVNAVDYSGYPDCRPDYIAAYETMANLATKRGIEGERLHIRTPLINLTKAQIIQQGLALGVDYRLTVSCYQANDGGEACGKCDSCRLRKQGFEQAGVADPTRYAF</sequence>
<accession>B3PC22</accession>
<feature type="chain" id="PRO_1000186571" description="7-cyano-7-deazaguanine synthase">
    <location>
        <begin position="1"/>
        <end position="225"/>
    </location>
</feature>
<feature type="binding site" evidence="1">
    <location>
        <begin position="10"/>
        <end position="20"/>
    </location>
    <ligand>
        <name>ATP</name>
        <dbReference type="ChEBI" id="CHEBI:30616"/>
    </ligand>
</feature>
<feature type="binding site" evidence="1">
    <location>
        <position position="189"/>
    </location>
    <ligand>
        <name>Zn(2+)</name>
        <dbReference type="ChEBI" id="CHEBI:29105"/>
    </ligand>
</feature>
<feature type="binding site" evidence="1">
    <location>
        <position position="199"/>
    </location>
    <ligand>
        <name>Zn(2+)</name>
        <dbReference type="ChEBI" id="CHEBI:29105"/>
    </ligand>
</feature>
<feature type="binding site" evidence="1">
    <location>
        <position position="202"/>
    </location>
    <ligand>
        <name>Zn(2+)</name>
        <dbReference type="ChEBI" id="CHEBI:29105"/>
    </ligand>
</feature>
<feature type="binding site" evidence="1">
    <location>
        <position position="205"/>
    </location>
    <ligand>
        <name>Zn(2+)</name>
        <dbReference type="ChEBI" id="CHEBI:29105"/>
    </ligand>
</feature>
<organism>
    <name type="scientific">Cellvibrio japonicus (strain Ueda107)</name>
    <name type="common">Pseudomonas fluorescens subsp. cellulosa</name>
    <dbReference type="NCBI Taxonomy" id="498211"/>
    <lineage>
        <taxon>Bacteria</taxon>
        <taxon>Pseudomonadati</taxon>
        <taxon>Pseudomonadota</taxon>
        <taxon>Gammaproteobacteria</taxon>
        <taxon>Cellvibrionales</taxon>
        <taxon>Cellvibrionaceae</taxon>
        <taxon>Cellvibrio</taxon>
    </lineage>
</organism>
<proteinExistence type="inferred from homology"/>
<comment type="function">
    <text evidence="1">Catalyzes the ATP-dependent conversion of 7-carboxy-7-deazaguanine (CDG) to 7-cyano-7-deazaguanine (preQ(0)).</text>
</comment>
<comment type="catalytic activity">
    <reaction evidence="1">
        <text>7-carboxy-7-deazaguanine + NH4(+) + ATP = 7-cyano-7-deazaguanine + ADP + phosphate + H2O + H(+)</text>
        <dbReference type="Rhea" id="RHEA:27982"/>
        <dbReference type="ChEBI" id="CHEBI:15377"/>
        <dbReference type="ChEBI" id="CHEBI:15378"/>
        <dbReference type="ChEBI" id="CHEBI:28938"/>
        <dbReference type="ChEBI" id="CHEBI:30616"/>
        <dbReference type="ChEBI" id="CHEBI:43474"/>
        <dbReference type="ChEBI" id="CHEBI:45075"/>
        <dbReference type="ChEBI" id="CHEBI:61036"/>
        <dbReference type="ChEBI" id="CHEBI:456216"/>
        <dbReference type="EC" id="6.3.4.20"/>
    </reaction>
</comment>
<comment type="cofactor">
    <cofactor evidence="1">
        <name>Zn(2+)</name>
        <dbReference type="ChEBI" id="CHEBI:29105"/>
    </cofactor>
    <text evidence="1">Binds 1 zinc ion per subunit.</text>
</comment>
<comment type="pathway">
    <text evidence="1">Purine metabolism; 7-cyano-7-deazaguanine biosynthesis.</text>
</comment>
<comment type="similarity">
    <text evidence="1">Belongs to the QueC family.</text>
</comment>
<dbReference type="EC" id="6.3.4.20" evidence="1"/>
<dbReference type="EMBL" id="CP000934">
    <property type="protein sequence ID" value="ACE85710.1"/>
    <property type="molecule type" value="Genomic_DNA"/>
</dbReference>
<dbReference type="RefSeq" id="WP_012488426.1">
    <property type="nucleotide sequence ID" value="NC_010995.1"/>
</dbReference>
<dbReference type="SMR" id="B3PC22"/>
<dbReference type="STRING" id="498211.CJA_2835"/>
<dbReference type="KEGG" id="cja:CJA_2835"/>
<dbReference type="eggNOG" id="COG0603">
    <property type="taxonomic scope" value="Bacteria"/>
</dbReference>
<dbReference type="HOGENOM" id="CLU_081854_1_1_6"/>
<dbReference type="OrthoDB" id="9789567at2"/>
<dbReference type="UniPathway" id="UPA00391"/>
<dbReference type="Proteomes" id="UP000001036">
    <property type="component" value="Chromosome"/>
</dbReference>
<dbReference type="GO" id="GO:0005524">
    <property type="term" value="F:ATP binding"/>
    <property type="evidence" value="ECO:0007669"/>
    <property type="project" value="UniProtKB-UniRule"/>
</dbReference>
<dbReference type="GO" id="GO:0016879">
    <property type="term" value="F:ligase activity, forming carbon-nitrogen bonds"/>
    <property type="evidence" value="ECO:0007669"/>
    <property type="project" value="UniProtKB-UniRule"/>
</dbReference>
<dbReference type="GO" id="GO:0008270">
    <property type="term" value="F:zinc ion binding"/>
    <property type="evidence" value="ECO:0007669"/>
    <property type="project" value="UniProtKB-UniRule"/>
</dbReference>
<dbReference type="GO" id="GO:0008616">
    <property type="term" value="P:queuosine biosynthetic process"/>
    <property type="evidence" value="ECO:0007669"/>
    <property type="project" value="UniProtKB-UniRule"/>
</dbReference>
<dbReference type="CDD" id="cd01995">
    <property type="entry name" value="QueC-like"/>
    <property type="match status" value="1"/>
</dbReference>
<dbReference type="FunFam" id="3.40.50.620:FF:000131">
    <property type="entry name" value="7-cyano-7-deazaguanine synthase"/>
    <property type="match status" value="1"/>
</dbReference>
<dbReference type="Gene3D" id="3.40.50.620">
    <property type="entry name" value="HUPs"/>
    <property type="match status" value="1"/>
</dbReference>
<dbReference type="HAMAP" id="MF_01633">
    <property type="entry name" value="QueC"/>
    <property type="match status" value="1"/>
</dbReference>
<dbReference type="InterPro" id="IPR018317">
    <property type="entry name" value="QueC"/>
</dbReference>
<dbReference type="InterPro" id="IPR014729">
    <property type="entry name" value="Rossmann-like_a/b/a_fold"/>
</dbReference>
<dbReference type="NCBIfam" id="TIGR00364">
    <property type="entry name" value="7-cyano-7-deazaguanine synthase QueC"/>
    <property type="match status" value="1"/>
</dbReference>
<dbReference type="PANTHER" id="PTHR42914">
    <property type="entry name" value="7-CYANO-7-DEAZAGUANINE SYNTHASE"/>
    <property type="match status" value="1"/>
</dbReference>
<dbReference type="PANTHER" id="PTHR42914:SF1">
    <property type="entry name" value="7-CYANO-7-DEAZAGUANINE SYNTHASE"/>
    <property type="match status" value="1"/>
</dbReference>
<dbReference type="Pfam" id="PF06508">
    <property type="entry name" value="QueC"/>
    <property type="match status" value="1"/>
</dbReference>
<dbReference type="PIRSF" id="PIRSF006293">
    <property type="entry name" value="ExsB"/>
    <property type="match status" value="1"/>
</dbReference>
<dbReference type="SUPFAM" id="SSF52402">
    <property type="entry name" value="Adenine nucleotide alpha hydrolases-like"/>
    <property type="match status" value="1"/>
</dbReference>
<name>QUEC_CELJU</name>
<protein>
    <recommendedName>
        <fullName evidence="1">7-cyano-7-deazaguanine synthase</fullName>
        <ecNumber evidence="1">6.3.4.20</ecNumber>
    </recommendedName>
    <alternativeName>
        <fullName evidence="1">7-cyano-7-carbaguanine synthase</fullName>
    </alternativeName>
    <alternativeName>
        <fullName evidence="1">PreQ(0) synthase</fullName>
    </alternativeName>
    <alternativeName>
        <fullName evidence="1">Queuosine biosynthesis protein QueC</fullName>
    </alternativeName>
</protein>
<gene>
    <name evidence="1" type="primary">queC</name>
    <name type="ordered locus">CJA_2835</name>
</gene>
<evidence type="ECO:0000255" key="1">
    <source>
        <dbReference type="HAMAP-Rule" id="MF_01633"/>
    </source>
</evidence>